<proteinExistence type="inferred from homology"/>
<feature type="chain" id="PRO_0000340542" description="Probable alpha-L-glutamate ligase 2">
    <location>
        <begin position="1"/>
        <end position="304"/>
    </location>
</feature>
<feature type="domain" description="ATP-grasp" evidence="1">
    <location>
        <begin position="107"/>
        <end position="290"/>
    </location>
</feature>
<feature type="binding site" evidence="1">
    <location>
        <position position="144"/>
    </location>
    <ligand>
        <name>ATP</name>
        <dbReference type="ChEBI" id="CHEBI:30616"/>
    </ligand>
</feature>
<feature type="binding site" evidence="1">
    <location>
        <begin position="181"/>
        <end position="182"/>
    </location>
    <ligand>
        <name>ATP</name>
        <dbReference type="ChEBI" id="CHEBI:30616"/>
    </ligand>
</feature>
<feature type="binding site" evidence="1">
    <location>
        <position position="190"/>
    </location>
    <ligand>
        <name>ATP</name>
        <dbReference type="ChEBI" id="CHEBI:30616"/>
    </ligand>
</feature>
<feature type="binding site" evidence="1">
    <location>
        <begin position="214"/>
        <end position="216"/>
    </location>
    <ligand>
        <name>ATP</name>
        <dbReference type="ChEBI" id="CHEBI:30616"/>
    </ligand>
</feature>
<feature type="binding site" evidence="1">
    <location>
        <position position="251"/>
    </location>
    <ligand>
        <name>Mg(2+)</name>
        <dbReference type="ChEBI" id="CHEBI:18420"/>
        <label>1</label>
    </ligand>
</feature>
<feature type="binding site" evidence="1">
    <location>
        <position position="251"/>
    </location>
    <ligand>
        <name>Mn(2+)</name>
        <dbReference type="ChEBI" id="CHEBI:29035"/>
        <label>1</label>
    </ligand>
</feature>
<feature type="binding site" evidence="1">
    <location>
        <position position="263"/>
    </location>
    <ligand>
        <name>Mg(2+)</name>
        <dbReference type="ChEBI" id="CHEBI:18420"/>
        <label>1</label>
    </ligand>
</feature>
<feature type="binding site" evidence="1">
    <location>
        <position position="263"/>
    </location>
    <ligand>
        <name>Mg(2+)</name>
        <dbReference type="ChEBI" id="CHEBI:18420"/>
        <label>2</label>
    </ligand>
</feature>
<feature type="binding site" evidence="1">
    <location>
        <position position="263"/>
    </location>
    <ligand>
        <name>Mn(2+)</name>
        <dbReference type="ChEBI" id="CHEBI:29035"/>
        <label>1</label>
    </ligand>
</feature>
<feature type="binding site" evidence="1">
    <location>
        <position position="263"/>
    </location>
    <ligand>
        <name>Mn(2+)</name>
        <dbReference type="ChEBI" id="CHEBI:29035"/>
        <label>2</label>
    </ligand>
</feature>
<feature type="binding site" evidence="1">
    <location>
        <position position="265"/>
    </location>
    <ligand>
        <name>Mg(2+)</name>
        <dbReference type="ChEBI" id="CHEBI:18420"/>
        <label>2</label>
    </ligand>
</feature>
<feature type="binding site" evidence="1">
    <location>
        <position position="265"/>
    </location>
    <ligand>
        <name>Mn(2+)</name>
        <dbReference type="ChEBI" id="CHEBI:29035"/>
        <label>2</label>
    </ligand>
</feature>
<protein>
    <recommendedName>
        <fullName evidence="1">Probable alpha-L-glutamate ligase 2</fullName>
        <ecNumber evidence="1">6.3.2.-</ecNumber>
    </recommendedName>
</protein>
<keyword id="KW-0067">ATP-binding</keyword>
<keyword id="KW-0436">Ligase</keyword>
<keyword id="KW-0460">Magnesium</keyword>
<keyword id="KW-0464">Manganese</keyword>
<keyword id="KW-0479">Metal-binding</keyword>
<keyword id="KW-0547">Nucleotide-binding</keyword>
<keyword id="KW-0648">Protein biosynthesis</keyword>
<keyword id="KW-1185">Reference proteome</keyword>
<reference key="1">
    <citation type="journal article" date="2005" name="Nucleic Acids Res.">
        <title>Genomic blueprint of Hahella chejuensis, a marine microbe producing an algicidal agent.</title>
        <authorList>
            <person name="Jeong H."/>
            <person name="Yim J.H."/>
            <person name="Lee C."/>
            <person name="Choi S.-H."/>
            <person name="Park Y.K."/>
            <person name="Yoon S.H."/>
            <person name="Hur C.-G."/>
            <person name="Kang H.-Y."/>
            <person name="Kim D."/>
            <person name="Lee H.H."/>
            <person name="Park K.H."/>
            <person name="Park S.-H."/>
            <person name="Park H.-S."/>
            <person name="Lee H.K."/>
            <person name="Oh T.K."/>
            <person name="Kim J.F."/>
        </authorList>
    </citation>
    <scope>NUCLEOTIDE SEQUENCE [LARGE SCALE GENOMIC DNA]</scope>
    <source>
        <strain>KCTC 2396</strain>
    </source>
</reference>
<dbReference type="EC" id="6.3.2.-" evidence="1"/>
<dbReference type="EMBL" id="CP000155">
    <property type="protein sequence ID" value="ABC30453.1"/>
    <property type="molecule type" value="Genomic_DNA"/>
</dbReference>
<dbReference type="RefSeq" id="WP_011397521.1">
    <property type="nucleotide sequence ID" value="NC_007645.1"/>
</dbReference>
<dbReference type="SMR" id="Q2SFX1"/>
<dbReference type="STRING" id="349521.HCH_03717"/>
<dbReference type="KEGG" id="hch:HCH_03717"/>
<dbReference type="eggNOG" id="COG0189">
    <property type="taxonomic scope" value="Bacteria"/>
</dbReference>
<dbReference type="HOGENOM" id="CLU_054353_0_1_6"/>
<dbReference type="OrthoDB" id="3865600at2"/>
<dbReference type="Proteomes" id="UP000000238">
    <property type="component" value="Chromosome"/>
</dbReference>
<dbReference type="GO" id="GO:0005737">
    <property type="term" value="C:cytoplasm"/>
    <property type="evidence" value="ECO:0007669"/>
    <property type="project" value="TreeGrafter"/>
</dbReference>
<dbReference type="GO" id="GO:0005524">
    <property type="term" value="F:ATP binding"/>
    <property type="evidence" value="ECO:0007669"/>
    <property type="project" value="UniProtKB-UniRule"/>
</dbReference>
<dbReference type="GO" id="GO:0046872">
    <property type="term" value="F:metal ion binding"/>
    <property type="evidence" value="ECO:0007669"/>
    <property type="project" value="UniProtKB-KW"/>
</dbReference>
<dbReference type="GO" id="GO:0018169">
    <property type="term" value="F:ribosomal S6-glutamic acid ligase activity"/>
    <property type="evidence" value="ECO:0007669"/>
    <property type="project" value="TreeGrafter"/>
</dbReference>
<dbReference type="GO" id="GO:0036211">
    <property type="term" value="P:protein modification process"/>
    <property type="evidence" value="ECO:0007669"/>
    <property type="project" value="InterPro"/>
</dbReference>
<dbReference type="GO" id="GO:0009432">
    <property type="term" value="P:SOS response"/>
    <property type="evidence" value="ECO:0007669"/>
    <property type="project" value="TreeGrafter"/>
</dbReference>
<dbReference type="GO" id="GO:0006412">
    <property type="term" value="P:translation"/>
    <property type="evidence" value="ECO:0007669"/>
    <property type="project" value="UniProtKB-KW"/>
</dbReference>
<dbReference type="FunFam" id="3.30.470.20:FF:000058">
    <property type="entry name" value="Alpha-aminoadipate--LysW ligase LysX protein"/>
    <property type="match status" value="1"/>
</dbReference>
<dbReference type="FunFam" id="3.30.1490.20:FF:000005">
    <property type="entry name" value="Probable alpha-L-glutamate ligase 1"/>
    <property type="match status" value="1"/>
</dbReference>
<dbReference type="Gene3D" id="3.40.50.20">
    <property type="match status" value="1"/>
</dbReference>
<dbReference type="Gene3D" id="3.30.1490.20">
    <property type="entry name" value="ATP-grasp fold, A domain"/>
    <property type="match status" value="1"/>
</dbReference>
<dbReference type="Gene3D" id="3.30.470.20">
    <property type="entry name" value="ATP-grasp fold, B domain"/>
    <property type="match status" value="1"/>
</dbReference>
<dbReference type="HAMAP" id="MF_01552">
    <property type="entry name" value="RimK"/>
    <property type="match status" value="1"/>
</dbReference>
<dbReference type="InterPro" id="IPR011761">
    <property type="entry name" value="ATP-grasp"/>
</dbReference>
<dbReference type="InterPro" id="IPR013651">
    <property type="entry name" value="ATP-grasp_RimK-type"/>
</dbReference>
<dbReference type="InterPro" id="IPR013815">
    <property type="entry name" value="ATP_grasp_subdomain_1"/>
</dbReference>
<dbReference type="InterPro" id="IPR023533">
    <property type="entry name" value="RimK"/>
</dbReference>
<dbReference type="InterPro" id="IPR041107">
    <property type="entry name" value="Rimk_N"/>
</dbReference>
<dbReference type="InterPro" id="IPR004666">
    <property type="entry name" value="Rp_bS6_RimK/Lys_biosynth_LsyX"/>
</dbReference>
<dbReference type="NCBIfam" id="NF007764">
    <property type="entry name" value="PRK10446.1"/>
    <property type="match status" value="1"/>
</dbReference>
<dbReference type="NCBIfam" id="TIGR00768">
    <property type="entry name" value="rimK_fam"/>
    <property type="match status" value="1"/>
</dbReference>
<dbReference type="PANTHER" id="PTHR21621:SF7">
    <property type="entry name" value="RIBOSOMAL PROTEIN BS6--L-GLUTAMATE LIGASE"/>
    <property type="match status" value="1"/>
</dbReference>
<dbReference type="PANTHER" id="PTHR21621">
    <property type="entry name" value="RIBOSOMAL PROTEIN S6 MODIFICATION PROTEIN"/>
    <property type="match status" value="1"/>
</dbReference>
<dbReference type="Pfam" id="PF08443">
    <property type="entry name" value="RimK"/>
    <property type="match status" value="1"/>
</dbReference>
<dbReference type="Pfam" id="PF18030">
    <property type="entry name" value="Rimk_N"/>
    <property type="match status" value="1"/>
</dbReference>
<dbReference type="SUPFAM" id="SSF56059">
    <property type="entry name" value="Glutathione synthetase ATP-binding domain-like"/>
    <property type="match status" value="1"/>
</dbReference>
<dbReference type="PROSITE" id="PS50975">
    <property type="entry name" value="ATP_GRASP"/>
    <property type="match status" value="1"/>
</dbReference>
<gene>
    <name evidence="1" type="primary">rimK2</name>
    <name type="ordered locus">HCH_03717</name>
</gene>
<sequence>MKIGILSRNSKLYSTSRLVEAARERGHEPRVVDVLKCYMNITTNAPTVRYRSSGVSEELQFDAVIPRIGASVTTYGCAVLRQFEVSGVYSINESIAITRSRDKLRAHQLLARKGVGQPVTSYAHSADATNDLIESVNGAPLIVKVMASTHGNGVVLAETDKAAETLINAFRGLKADFLVQEFIKEAGGSDIRCFVIGDKVVAAMQRTAQPGEFRSNLHRGGSAQVVKLRPNERRLAVQAAQVMGLDLAGVDIIRSSHGPLVLEVNSSPGLKGIESATNKDIAGAIIDYIVKDVLNGPNKPKGKG</sequence>
<evidence type="ECO:0000255" key="1">
    <source>
        <dbReference type="HAMAP-Rule" id="MF_01552"/>
    </source>
</evidence>
<comment type="cofactor">
    <cofactor evidence="1">
        <name>Mg(2+)</name>
        <dbReference type="ChEBI" id="CHEBI:18420"/>
    </cofactor>
    <cofactor evidence="1">
        <name>Mn(2+)</name>
        <dbReference type="ChEBI" id="CHEBI:29035"/>
    </cofactor>
    <text evidence="1">Binds 2 magnesium or manganese ions per subunit.</text>
</comment>
<comment type="similarity">
    <text evidence="1">Belongs to the RimK family.</text>
</comment>
<organism>
    <name type="scientific">Hahella chejuensis (strain KCTC 2396)</name>
    <dbReference type="NCBI Taxonomy" id="349521"/>
    <lineage>
        <taxon>Bacteria</taxon>
        <taxon>Pseudomonadati</taxon>
        <taxon>Pseudomonadota</taxon>
        <taxon>Gammaproteobacteria</taxon>
        <taxon>Oceanospirillales</taxon>
        <taxon>Hahellaceae</taxon>
        <taxon>Hahella</taxon>
    </lineage>
</organism>
<accession>Q2SFX1</accession>
<name>RIMK2_HAHCH</name>